<dbReference type="EMBL" id="CP000890">
    <property type="protein sequence ID" value="ABX78621.1"/>
    <property type="molecule type" value="Genomic_DNA"/>
</dbReference>
<dbReference type="RefSeq" id="WP_005771977.1">
    <property type="nucleotide sequence ID" value="NC_010117.1"/>
</dbReference>
<dbReference type="SMR" id="A9NBL4"/>
<dbReference type="KEGG" id="cbs:COXBURSA331_A0497"/>
<dbReference type="HOGENOM" id="CLU_095424_4_1_6"/>
<dbReference type="GO" id="GO:0022625">
    <property type="term" value="C:cytosolic large ribosomal subunit"/>
    <property type="evidence" value="ECO:0007669"/>
    <property type="project" value="TreeGrafter"/>
</dbReference>
<dbReference type="GO" id="GO:0003735">
    <property type="term" value="F:structural constituent of ribosome"/>
    <property type="evidence" value="ECO:0007669"/>
    <property type="project" value="InterPro"/>
</dbReference>
<dbReference type="GO" id="GO:0006412">
    <property type="term" value="P:translation"/>
    <property type="evidence" value="ECO:0007669"/>
    <property type="project" value="UniProtKB-UniRule"/>
</dbReference>
<dbReference type="FunFam" id="2.40.50.100:FF:000001">
    <property type="entry name" value="50S ribosomal protein L27"/>
    <property type="match status" value="1"/>
</dbReference>
<dbReference type="Gene3D" id="2.40.50.100">
    <property type="match status" value="1"/>
</dbReference>
<dbReference type="HAMAP" id="MF_00539">
    <property type="entry name" value="Ribosomal_bL27"/>
    <property type="match status" value="1"/>
</dbReference>
<dbReference type="InterPro" id="IPR001684">
    <property type="entry name" value="Ribosomal_bL27"/>
</dbReference>
<dbReference type="InterPro" id="IPR018261">
    <property type="entry name" value="Ribosomal_bL27_CS"/>
</dbReference>
<dbReference type="NCBIfam" id="TIGR00062">
    <property type="entry name" value="L27"/>
    <property type="match status" value="1"/>
</dbReference>
<dbReference type="PANTHER" id="PTHR15893:SF0">
    <property type="entry name" value="LARGE RIBOSOMAL SUBUNIT PROTEIN BL27M"/>
    <property type="match status" value="1"/>
</dbReference>
<dbReference type="PANTHER" id="PTHR15893">
    <property type="entry name" value="RIBOSOMAL PROTEIN L27"/>
    <property type="match status" value="1"/>
</dbReference>
<dbReference type="Pfam" id="PF01016">
    <property type="entry name" value="Ribosomal_L27"/>
    <property type="match status" value="1"/>
</dbReference>
<dbReference type="PRINTS" id="PR00063">
    <property type="entry name" value="RIBOSOMALL27"/>
</dbReference>
<dbReference type="SUPFAM" id="SSF110324">
    <property type="entry name" value="Ribosomal L27 protein-like"/>
    <property type="match status" value="1"/>
</dbReference>
<dbReference type="PROSITE" id="PS00831">
    <property type="entry name" value="RIBOSOMAL_L27"/>
    <property type="match status" value="1"/>
</dbReference>
<keyword id="KW-0687">Ribonucleoprotein</keyword>
<keyword id="KW-0689">Ribosomal protein</keyword>
<name>RL27_COXBR</name>
<feature type="chain" id="PRO_1000081885" description="Large ribosomal subunit protein bL27">
    <location>
        <begin position="1"/>
        <end position="90"/>
    </location>
</feature>
<feature type="region of interest" description="Disordered" evidence="2">
    <location>
        <begin position="1"/>
        <end position="22"/>
    </location>
</feature>
<evidence type="ECO:0000255" key="1">
    <source>
        <dbReference type="HAMAP-Rule" id="MF_00539"/>
    </source>
</evidence>
<evidence type="ECO:0000256" key="2">
    <source>
        <dbReference type="SAM" id="MobiDB-lite"/>
    </source>
</evidence>
<evidence type="ECO:0000305" key="3"/>
<comment type="similarity">
    <text evidence="1">Belongs to the bacterial ribosomal protein bL27 family.</text>
</comment>
<protein>
    <recommendedName>
        <fullName evidence="1">Large ribosomal subunit protein bL27</fullName>
    </recommendedName>
    <alternativeName>
        <fullName evidence="3">50S ribosomal protein L27</fullName>
    </alternativeName>
</protein>
<reference key="1">
    <citation type="submission" date="2007-11" db="EMBL/GenBank/DDBJ databases">
        <title>Genome sequencing of phylogenetically and phenotypically diverse Coxiella burnetii isolates.</title>
        <authorList>
            <person name="Seshadri R."/>
            <person name="Samuel J.E."/>
        </authorList>
    </citation>
    <scope>NUCLEOTIDE SEQUENCE [LARGE SCALE GENOMIC DNA]</scope>
    <source>
        <strain>RSA 331 / Henzerling II</strain>
    </source>
</reference>
<proteinExistence type="inferred from homology"/>
<gene>
    <name evidence="1" type="primary">rpmA</name>
    <name type="ordered locus">COXBURSA331_A0497</name>
</gene>
<organism>
    <name type="scientific">Coxiella burnetii (strain RSA 331 / Henzerling II)</name>
    <dbReference type="NCBI Taxonomy" id="360115"/>
    <lineage>
        <taxon>Bacteria</taxon>
        <taxon>Pseudomonadati</taxon>
        <taxon>Pseudomonadota</taxon>
        <taxon>Gammaproteobacteria</taxon>
        <taxon>Legionellales</taxon>
        <taxon>Coxiellaceae</taxon>
        <taxon>Coxiella</taxon>
    </lineage>
</organism>
<sequence>MAHKKAGGSTRNGRDSNPKMLGVKRFGGERVLAGNIIVRQRGTHYRPGENMGMGRDHTLYALIEGKVKFTRKGPKKRNFVSIEPLEESQP</sequence>
<accession>A9NBL4</accession>